<protein>
    <recommendedName>
        <fullName>UPF0758 protein str1465</fullName>
    </recommendedName>
</protein>
<proteinExistence type="inferred from homology"/>
<comment type="similarity">
    <text evidence="2">Belongs to the UPF0758 family.</text>
</comment>
<reference key="1">
    <citation type="journal article" date="2004" name="Nat. Biotechnol.">
        <title>Complete sequence and comparative genome analysis of the dairy bacterium Streptococcus thermophilus.</title>
        <authorList>
            <person name="Bolotin A."/>
            <person name="Quinquis B."/>
            <person name="Renault P."/>
            <person name="Sorokin A."/>
            <person name="Ehrlich S.D."/>
            <person name="Kulakauskas S."/>
            <person name="Lapidus A."/>
            <person name="Goltsman E."/>
            <person name="Mazur M."/>
            <person name="Pusch G.D."/>
            <person name="Fonstein M."/>
            <person name="Overbeek R."/>
            <person name="Kyprides N."/>
            <person name="Purnelle B."/>
            <person name="Prozzi D."/>
            <person name="Ngui K."/>
            <person name="Masuy D."/>
            <person name="Hancy F."/>
            <person name="Burteau S."/>
            <person name="Boutry M."/>
            <person name="Delcour J."/>
            <person name="Goffeau A."/>
            <person name="Hols P."/>
        </authorList>
    </citation>
    <scope>NUCLEOTIDE SEQUENCE [LARGE SCALE GENOMIC DNA]</scope>
    <source>
        <strain>CNRZ 1066</strain>
    </source>
</reference>
<organism>
    <name type="scientific">Streptococcus thermophilus (strain CNRZ 1066)</name>
    <dbReference type="NCBI Taxonomy" id="299768"/>
    <lineage>
        <taxon>Bacteria</taxon>
        <taxon>Bacillati</taxon>
        <taxon>Bacillota</taxon>
        <taxon>Bacilli</taxon>
        <taxon>Lactobacillales</taxon>
        <taxon>Streptococcaceae</taxon>
        <taxon>Streptococcus</taxon>
    </lineage>
</organism>
<gene>
    <name type="ordered locus">str1465</name>
</gene>
<accession>Q5LYU6</accession>
<feature type="chain" id="PRO_0000190743" description="UPF0758 protein str1465">
    <location>
        <begin position="1"/>
        <end position="228"/>
    </location>
</feature>
<feature type="domain" description="MPN" evidence="1">
    <location>
        <begin position="103"/>
        <end position="225"/>
    </location>
</feature>
<feature type="short sequence motif" description="JAMM motif" evidence="1">
    <location>
        <begin position="174"/>
        <end position="187"/>
    </location>
</feature>
<feature type="binding site" evidence="1">
    <location>
        <position position="174"/>
    </location>
    <ligand>
        <name>Zn(2+)</name>
        <dbReference type="ChEBI" id="CHEBI:29105"/>
        <note>catalytic</note>
    </ligand>
</feature>
<feature type="binding site" evidence="1">
    <location>
        <position position="176"/>
    </location>
    <ligand>
        <name>Zn(2+)</name>
        <dbReference type="ChEBI" id="CHEBI:29105"/>
        <note>catalytic</note>
    </ligand>
</feature>
<feature type="binding site" evidence="1">
    <location>
        <position position="187"/>
    </location>
    <ligand>
        <name>Zn(2+)</name>
        <dbReference type="ChEBI" id="CHEBI:29105"/>
        <note>catalytic</note>
    </ligand>
</feature>
<name>Y1465_STRT1</name>
<evidence type="ECO:0000255" key="1">
    <source>
        <dbReference type="PROSITE-ProRule" id="PRU01182"/>
    </source>
</evidence>
<evidence type="ECO:0000305" key="2"/>
<sequence length="228" mass="25818">MYSIVAEESGLLPRERLLQKGAEVLSDQELLAIVLRTGTKSESVLSMANRILKGMTSLADLSRLSLNELQEIPGIGRVKSIELKAMVELAKRIEKAELARSEQIMSSQQVARRMMLDIGDKPQEHLVAIYLDTQNRIIQQKTVFIGGVRRSIAEPREILYYACHLMATSLIVVHNHPSGEAYPSRNDIDFTQKIKRSCDDLGICLLDHLIVGKSTYYSFREEREDFEL</sequence>
<dbReference type="EMBL" id="CP000024">
    <property type="protein sequence ID" value="AAV63001.1"/>
    <property type="molecule type" value="Genomic_DNA"/>
</dbReference>
<dbReference type="RefSeq" id="WP_011227424.1">
    <property type="nucleotide sequence ID" value="NC_006449.1"/>
</dbReference>
<dbReference type="SMR" id="Q5LYU6"/>
<dbReference type="KEGG" id="stc:str1465"/>
<dbReference type="HOGENOM" id="CLU_073529_0_2_9"/>
<dbReference type="GO" id="GO:0046872">
    <property type="term" value="F:metal ion binding"/>
    <property type="evidence" value="ECO:0007669"/>
    <property type="project" value="UniProtKB-KW"/>
</dbReference>
<dbReference type="GO" id="GO:0008237">
    <property type="term" value="F:metallopeptidase activity"/>
    <property type="evidence" value="ECO:0007669"/>
    <property type="project" value="UniProtKB-KW"/>
</dbReference>
<dbReference type="GO" id="GO:0006508">
    <property type="term" value="P:proteolysis"/>
    <property type="evidence" value="ECO:0007669"/>
    <property type="project" value="UniProtKB-KW"/>
</dbReference>
<dbReference type="CDD" id="cd08071">
    <property type="entry name" value="MPN_DUF2466"/>
    <property type="match status" value="1"/>
</dbReference>
<dbReference type="Gene3D" id="3.40.140.10">
    <property type="entry name" value="Cytidine Deaminase, domain 2"/>
    <property type="match status" value="1"/>
</dbReference>
<dbReference type="InterPro" id="IPR037518">
    <property type="entry name" value="MPN"/>
</dbReference>
<dbReference type="InterPro" id="IPR025657">
    <property type="entry name" value="RadC_JAB"/>
</dbReference>
<dbReference type="InterPro" id="IPR010994">
    <property type="entry name" value="RuvA_2-like"/>
</dbReference>
<dbReference type="InterPro" id="IPR001405">
    <property type="entry name" value="UPF0758"/>
</dbReference>
<dbReference type="InterPro" id="IPR020891">
    <property type="entry name" value="UPF0758_CS"/>
</dbReference>
<dbReference type="InterPro" id="IPR046778">
    <property type="entry name" value="UPF0758_N"/>
</dbReference>
<dbReference type="NCBIfam" id="NF000642">
    <property type="entry name" value="PRK00024.1"/>
    <property type="match status" value="1"/>
</dbReference>
<dbReference type="NCBIfam" id="TIGR00608">
    <property type="entry name" value="radc"/>
    <property type="match status" value="1"/>
</dbReference>
<dbReference type="PANTHER" id="PTHR30471">
    <property type="entry name" value="DNA REPAIR PROTEIN RADC"/>
    <property type="match status" value="1"/>
</dbReference>
<dbReference type="PANTHER" id="PTHR30471:SF3">
    <property type="entry name" value="UPF0758 PROTEIN YEES-RELATED"/>
    <property type="match status" value="1"/>
</dbReference>
<dbReference type="Pfam" id="PF04002">
    <property type="entry name" value="RadC"/>
    <property type="match status" value="1"/>
</dbReference>
<dbReference type="Pfam" id="PF20582">
    <property type="entry name" value="UPF0758_N"/>
    <property type="match status" value="1"/>
</dbReference>
<dbReference type="SUPFAM" id="SSF102712">
    <property type="entry name" value="JAB1/MPN domain"/>
    <property type="match status" value="1"/>
</dbReference>
<dbReference type="SUPFAM" id="SSF47781">
    <property type="entry name" value="RuvA domain 2-like"/>
    <property type="match status" value="1"/>
</dbReference>
<dbReference type="PROSITE" id="PS50249">
    <property type="entry name" value="MPN"/>
    <property type="match status" value="1"/>
</dbReference>
<dbReference type="PROSITE" id="PS01302">
    <property type="entry name" value="UPF0758"/>
    <property type="match status" value="1"/>
</dbReference>
<keyword id="KW-0378">Hydrolase</keyword>
<keyword id="KW-0479">Metal-binding</keyword>
<keyword id="KW-0482">Metalloprotease</keyword>
<keyword id="KW-0645">Protease</keyword>
<keyword id="KW-0862">Zinc</keyword>